<accession>P57310</accession>
<sequence>MNIKDIKKINFFISEKKNKNIHLIGIGGAGMMGIALILLKLGYKVSGSDLLESLMIKKLINLGATIYLQHSEKNIKNVDFIIKSSAISSNNKEILAAKKRNIPILLRAEMIEILMSFKKGIAVSGTHGKTTTTSMIADIFIDSGLDPTVINGGLIKSINSYAKLGSSSYFITEADESDASFLYLNPNIIIVTNIEPDHIDHYDNSFKKLKQTFLIFLKKITLYGTAIVCIDNNAICDILTNLKCKIITYGFNKNADVRIFLYKQNNFIGHFYIILKNNKKLNIILNIPGKHNALNAAAAIALAIHEGINNDLMIASLKNFQGTCRRFEFLGFLSIDQGFDKRANCMLIDDYGHHPTELSETIKTIRISWPNKNLIMIFQPHRYTRTYNLYHDFVQTLSQVDVLLILHVYSANEKFIVGADSLSLFNDIKKLGKNYVTLISNHNMILDTLIQTLQGNDIILIQGAGNIDTIAHKILIKKTKKVIK</sequence>
<proteinExistence type="inferred from homology"/>
<protein>
    <recommendedName>
        <fullName evidence="1">UDP-N-acetylmuramate--L-alanine ligase</fullName>
        <ecNumber evidence="1">6.3.2.8</ecNumber>
    </recommendedName>
    <alternativeName>
        <fullName evidence="1">UDP-N-acetylmuramoyl-L-alanine synthetase</fullName>
    </alternativeName>
</protein>
<evidence type="ECO:0000255" key="1">
    <source>
        <dbReference type="HAMAP-Rule" id="MF_00046"/>
    </source>
</evidence>
<comment type="function">
    <text evidence="1">Cell wall formation.</text>
</comment>
<comment type="catalytic activity">
    <reaction evidence="1">
        <text>UDP-N-acetyl-alpha-D-muramate + L-alanine + ATP = UDP-N-acetyl-alpha-D-muramoyl-L-alanine + ADP + phosphate + H(+)</text>
        <dbReference type="Rhea" id="RHEA:23372"/>
        <dbReference type="ChEBI" id="CHEBI:15378"/>
        <dbReference type="ChEBI" id="CHEBI:30616"/>
        <dbReference type="ChEBI" id="CHEBI:43474"/>
        <dbReference type="ChEBI" id="CHEBI:57972"/>
        <dbReference type="ChEBI" id="CHEBI:70757"/>
        <dbReference type="ChEBI" id="CHEBI:83898"/>
        <dbReference type="ChEBI" id="CHEBI:456216"/>
        <dbReference type="EC" id="6.3.2.8"/>
    </reaction>
</comment>
<comment type="pathway">
    <text evidence="1">Cell wall biogenesis; peptidoglycan biosynthesis.</text>
</comment>
<comment type="subcellular location">
    <subcellularLocation>
        <location evidence="1">Cytoplasm</location>
    </subcellularLocation>
</comment>
<comment type="similarity">
    <text evidence="1">Belongs to the MurCDEF family.</text>
</comment>
<gene>
    <name evidence="1" type="primary">murC</name>
    <name type="ordered locus">BU215</name>
</gene>
<name>MURC_BUCAI</name>
<keyword id="KW-0067">ATP-binding</keyword>
<keyword id="KW-0131">Cell cycle</keyword>
<keyword id="KW-0132">Cell division</keyword>
<keyword id="KW-0133">Cell shape</keyword>
<keyword id="KW-0961">Cell wall biogenesis/degradation</keyword>
<keyword id="KW-0963">Cytoplasm</keyword>
<keyword id="KW-0436">Ligase</keyword>
<keyword id="KW-0547">Nucleotide-binding</keyword>
<keyword id="KW-0573">Peptidoglycan synthesis</keyword>
<keyword id="KW-1185">Reference proteome</keyword>
<organism>
    <name type="scientific">Buchnera aphidicola subsp. Acyrthosiphon pisum (strain APS)</name>
    <name type="common">Acyrthosiphon pisum symbiotic bacterium</name>
    <dbReference type="NCBI Taxonomy" id="107806"/>
    <lineage>
        <taxon>Bacteria</taxon>
        <taxon>Pseudomonadati</taxon>
        <taxon>Pseudomonadota</taxon>
        <taxon>Gammaproteobacteria</taxon>
        <taxon>Enterobacterales</taxon>
        <taxon>Erwiniaceae</taxon>
        <taxon>Buchnera</taxon>
    </lineage>
</organism>
<feature type="chain" id="PRO_0000182068" description="UDP-N-acetylmuramate--L-alanine ligase">
    <location>
        <begin position="1"/>
        <end position="484"/>
    </location>
</feature>
<feature type="binding site" evidence="1">
    <location>
        <begin position="125"/>
        <end position="131"/>
    </location>
    <ligand>
        <name>ATP</name>
        <dbReference type="ChEBI" id="CHEBI:30616"/>
    </ligand>
</feature>
<reference key="1">
    <citation type="journal article" date="2000" name="Nature">
        <title>Genome sequence of the endocellular bacterial symbiont of aphids Buchnera sp. APS.</title>
        <authorList>
            <person name="Shigenobu S."/>
            <person name="Watanabe H."/>
            <person name="Hattori M."/>
            <person name="Sakaki Y."/>
            <person name="Ishikawa H."/>
        </authorList>
    </citation>
    <scope>NUCLEOTIDE SEQUENCE [LARGE SCALE GENOMIC DNA]</scope>
    <source>
        <strain>APS</strain>
    </source>
</reference>
<dbReference type="EC" id="6.3.2.8" evidence="1"/>
<dbReference type="EMBL" id="BA000003">
    <property type="protein sequence ID" value="BAB12931.1"/>
    <property type="molecule type" value="Genomic_DNA"/>
</dbReference>
<dbReference type="RefSeq" id="NP_240045.1">
    <property type="nucleotide sequence ID" value="NC_002528.1"/>
</dbReference>
<dbReference type="RefSeq" id="WP_009874172.1">
    <property type="nucleotide sequence ID" value="NC_002528.1"/>
</dbReference>
<dbReference type="SMR" id="P57310"/>
<dbReference type="STRING" id="563178.BUAP5A_211"/>
<dbReference type="EnsemblBacteria" id="BAB12931">
    <property type="protein sequence ID" value="BAB12931"/>
    <property type="gene ID" value="BAB12931"/>
</dbReference>
<dbReference type="KEGG" id="buc:BU215"/>
<dbReference type="PATRIC" id="fig|107806.10.peg.228"/>
<dbReference type="eggNOG" id="COG0773">
    <property type="taxonomic scope" value="Bacteria"/>
</dbReference>
<dbReference type="HOGENOM" id="CLU_028104_2_2_6"/>
<dbReference type="UniPathway" id="UPA00219"/>
<dbReference type="Proteomes" id="UP000001806">
    <property type="component" value="Chromosome"/>
</dbReference>
<dbReference type="GO" id="GO:0005737">
    <property type="term" value="C:cytoplasm"/>
    <property type="evidence" value="ECO:0007669"/>
    <property type="project" value="UniProtKB-SubCell"/>
</dbReference>
<dbReference type="GO" id="GO:0005524">
    <property type="term" value="F:ATP binding"/>
    <property type="evidence" value="ECO:0007669"/>
    <property type="project" value="UniProtKB-UniRule"/>
</dbReference>
<dbReference type="GO" id="GO:0008763">
    <property type="term" value="F:UDP-N-acetylmuramate-L-alanine ligase activity"/>
    <property type="evidence" value="ECO:0007669"/>
    <property type="project" value="UniProtKB-UniRule"/>
</dbReference>
<dbReference type="GO" id="GO:0051301">
    <property type="term" value="P:cell division"/>
    <property type="evidence" value="ECO:0007669"/>
    <property type="project" value="UniProtKB-KW"/>
</dbReference>
<dbReference type="GO" id="GO:0071555">
    <property type="term" value="P:cell wall organization"/>
    <property type="evidence" value="ECO:0007669"/>
    <property type="project" value="UniProtKB-KW"/>
</dbReference>
<dbReference type="GO" id="GO:0009252">
    <property type="term" value="P:peptidoglycan biosynthetic process"/>
    <property type="evidence" value="ECO:0007669"/>
    <property type="project" value="UniProtKB-UniRule"/>
</dbReference>
<dbReference type="GO" id="GO:0008360">
    <property type="term" value="P:regulation of cell shape"/>
    <property type="evidence" value="ECO:0007669"/>
    <property type="project" value="UniProtKB-KW"/>
</dbReference>
<dbReference type="Gene3D" id="3.90.190.20">
    <property type="entry name" value="Mur ligase, C-terminal domain"/>
    <property type="match status" value="1"/>
</dbReference>
<dbReference type="Gene3D" id="3.40.1190.10">
    <property type="entry name" value="Mur-like, catalytic domain"/>
    <property type="match status" value="1"/>
</dbReference>
<dbReference type="Gene3D" id="3.40.50.720">
    <property type="entry name" value="NAD(P)-binding Rossmann-like Domain"/>
    <property type="match status" value="1"/>
</dbReference>
<dbReference type="HAMAP" id="MF_00046">
    <property type="entry name" value="MurC"/>
    <property type="match status" value="1"/>
</dbReference>
<dbReference type="InterPro" id="IPR036565">
    <property type="entry name" value="Mur-like_cat_sf"/>
</dbReference>
<dbReference type="InterPro" id="IPR004101">
    <property type="entry name" value="Mur_ligase_C"/>
</dbReference>
<dbReference type="InterPro" id="IPR036615">
    <property type="entry name" value="Mur_ligase_C_dom_sf"/>
</dbReference>
<dbReference type="InterPro" id="IPR013221">
    <property type="entry name" value="Mur_ligase_cen"/>
</dbReference>
<dbReference type="InterPro" id="IPR000713">
    <property type="entry name" value="Mur_ligase_N"/>
</dbReference>
<dbReference type="InterPro" id="IPR050061">
    <property type="entry name" value="MurCDEF_pg_biosynth"/>
</dbReference>
<dbReference type="InterPro" id="IPR005758">
    <property type="entry name" value="UDP-N-AcMur_Ala_ligase_MurC"/>
</dbReference>
<dbReference type="NCBIfam" id="TIGR01082">
    <property type="entry name" value="murC"/>
    <property type="match status" value="1"/>
</dbReference>
<dbReference type="PANTHER" id="PTHR43445:SF3">
    <property type="entry name" value="UDP-N-ACETYLMURAMATE--L-ALANINE LIGASE"/>
    <property type="match status" value="1"/>
</dbReference>
<dbReference type="PANTHER" id="PTHR43445">
    <property type="entry name" value="UDP-N-ACETYLMURAMATE--L-ALANINE LIGASE-RELATED"/>
    <property type="match status" value="1"/>
</dbReference>
<dbReference type="Pfam" id="PF01225">
    <property type="entry name" value="Mur_ligase"/>
    <property type="match status" value="1"/>
</dbReference>
<dbReference type="Pfam" id="PF02875">
    <property type="entry name" value="Mur_ligase_C"/>
    <property type="match status" value="1"/>
</dbReference>
<dbReference type="Pfam" id="PF08245">
    <property type="entry name" value="Mur_ligase_M"/>
    <property type="match status" value="1"/>
</dbReference>
<dbReference type="SUPFAM" id="SSF51984">
    <property type="entry name" value="MurCD N-terminal domain"/>
    <property type="match status" value="1"/>
</dbReference>
<dbReference type="SUPFAM" id="SSF53623">
    <property type="entry name" value="MurD-like peptide ligases, catalytic domain"/>
    <property type="match status" value="1"/>
</dbReference>
<dbReference type="SUPFAM" id="SSF53244">
    <property type="entry name" value="MurD-like peptide ligases, peptide-binding domain"/>
    <property type="match status" value="1"/>
</dbReference>